<name>SLS4_TRYBB</name>
<keyword id="KW-0333">Golgi apparatus</keyword>
<keyword id="KW-0418">Kinase</keyword>
<keyword id="KW-0443">Lipid metabolism</keyword>
<keyword id="KW-0472">Membrane</keyword>
<keyword id="KW-0746">Sphingolipid metabolism</keyword>
<keyword id="KW-0808">Transferase</keyword>
<keyword id="KW-0812">Transmembrane</keyword>
<keyword id="KW-1133">Transmembrane helix</keyword>
<proteinExistence type="evidence at protein level"/>
<accession>B3A0M2</accession>
<sequence length="365" mass="40900">MISYPFFSLSPPGLVPPPMAVPPVEMYSGSFWNRMRKPLPLRTQVIRFTVVFVIVSFILAVALQITHERMPDPKVTKPLPDLGFELLTKVPGMYVLADCCIGFLNILSVFTAFKLYLLHRHCVGSGEPELPCNIPGVSRFFLSVWLCKENCRIELRNIHTIAWIRFITSYALLLLFRSAVIVMTSLPAPDDLCQDPPKIENPVKNVILTVLTAGGGSIHCGDLMYSGHTVILTLHLMFHWIYGAMVHWSFRPVVTVVAIFGYYCIVASRFHYTDDVLVAIYLTIATFIAVGHNADGAPWQLQLFIRWWPCCGANSREVTEDSQPVMVAFKSEELDEMNGVLEGRQKKHGGVGDGESLMFKCGAYV</sequence>
<evidence type="ECO:0000250" key="1"/>
<evidence type="ECO:0000255" key="2"/>
<evidence type="ECO:0000269" key="3">
    <source>
    </source>
</evidence>
<evidence type="ECO:0000269" key="4">
    <source>
    </source>
</evidence>
<evidence type="ECO:0000269" key="5">
    <source>
    </source>
</evidence>
<evidence type="ECO:0000269" key="6">
    <source>
    </source>
</evidence>
<evidence type="ECO:0000303" key="7">
    <source>
    </source>
</evidence>
<evidence type="ECO:0000303" key="8">
    <source>
    </source>
</evidence>
<evidence type="ECO:0000305" key="9">
    <source>
    </source>
</evidence>
<evidence type="ECO:0000305" key="10">
    <source>
    </source>
</evidence>
<feature type="chain" id="PRO_0000413858" description="Phosphatidylcholine:ceramide cholinephosphotransferase 4">
    <location>
        <begin position="1"/>
        <end position="365"/>
    </location>
</feature>
<feature type="topological domain" description="Cytoplasmic" evidence="2">
    <location>
        <begin position="1"/>
        <end position="44"/>
    </location>
</feature>
<feature type="transmembrane region" description="Helical" evidence="2">
    <location>
        <begin position="45"/>
        <end position="65"/>
    </location>
</feature>
<feature type="topological domain" description="Lumenal" evidence="2">
    <location>
        <begin position="66"/>
        <end position="92"/>
    </location>
</feature>
<feature type="transmembrane region" description="Helical" evidence="2">
    <location>
        <begin position="93"/>
        <end position="113"/>
    </location>
</feature>
<feature type="topological domain" description="Cytoplasmic" evidence="2">
    <location>
        <begin position="114"/>
        <end position="165"/>
    </location>
</feature>
<feature type="transmembrane region" description="Helical" evidence="2">
    <location>
        <begin position="166"/>
        <end position="186"/>
    </location>
</feature>
<feature type="topological domain" description="Lumenal" evidence="2">
    <location>
        <begin position="187"/>
        <end position="229"/>
    </location>
</feature>
<feature type="transmembrane region" description="Helical" evidence="2">
    <location>
        <begin position="230"/>
        <end position="250"/>
    </location>
</feature>
<feature type="topological domain" description="Cytoplasmic" evidence="2">
    <location>
        <position position="251"/>
    </location>
</feature>
<feature type="transmembrane region" description="Helical" evidence="2">
    <location>
        <begin position="252"/>
        <end position="272"/>
    </location>
</feature>
<feature type="topological domain" description="Lumenal" evidence="2">
    <location>
        <begin position="273"/>
        <end position="275"/>
    </location>
</feature>
<feature type="transmembrane region" description="Helical" evidence="2">
    <location>
        <begin position="276"/>
        <end position="296"/>
    </location>
</feature>
<feature type="topological domain" description="Cytoplasmic" evidence="2">
    <location>
        <begin position="297"/>
        <end position="365"/>
    </location>
</feature>
<feature type="active site" evidence="1">
    <location>
        <position position="228"/>
    </location>
</feature>
<feature type="active site" evidence="1">
    <location>
        <position position="271"/>
    </location>
</feature>
<feature type="active site" evidence="1">
    <location>
        <position position="275"/>
    </location>
</feature>
<reference key="1">
    <citation type="journal article" date="2008" name="Mol. Microbiol.">
        <title>Developmentally regulated sphingolipid synthesis in African trypanosomes.</title>
        <authorList>
            <person name="Sutterwala S.S."/>
            <person name="Hsu F.F."/>
            <person name="Sevova E.S."/>
            <person name="Schwartz K.J."/>
            <person name="Zhang K."/>
            <person name="Key P."/>
            <person name="Turk J."/>
            <person name="Beverley S.M."/>
            <person name="Bangs J.D."/>
        </authorList>
    </citation>
    <scope>NUCLEOTIDE SEQUENCE [GENOMIC DNA]</scope>
    <scope>FUNCTION</scope>
    <scope>CATALYTIC ACTIVITY</scope>
    <scope>SUBCELLULAR LOCATION</scope>
    <scope>DEVELOPMENTAL STAGE</scope>
    <scope>DISRUPTION PHENOTYPE</scope>
    <source>
        <strain evidence="3">427</strain>
    </source>
</reference>
<reference key="2">
    <citation type="journal article" date="2010" name="J. Biol. Chem.">
        <title>Cell-free synthesis and functional characterization of sphingolipid synthases from parasitic trypanosomatid protozoa.</title>
        <authorList>
            <person name="Sevova E.S."/>
            <person name="Goren M.A."/>
            <person name="Schwartz K.J."/>
            <person name="Hsu F.F."/>
            <person name="Turk J."/>
            <person name="Fox B.G."/>
            <person name="Bangs J.D."/>
        </authorList>
    </citation>
    <scope>NUCLEOTIDE SEQUENCE [GENOMIC DNA]</scope>
    <scope>FUNCTION</scope>
    <scope>CATALYTIC ACTIVITY</scope>
    <source>
        <strain evidence="5">427</strain>
    </source>
</reference>
<reference key="3">
    <citation type="journal article" date="2009" name="Mol. Biochem. Parasitol.">
        <title>The Trypanosoma brucei sphingolipid synthase, an essential enzyme and drug target.</title>
        <authorList>
            <person name="Mina J.G."/>
            <person name="Pan S.Y."/>
            <person name="Wansadhipathi N.K."/>
            <person name="Bruce C.R."/>
            <person name="Shams-Eldin H."/>
            <person name="Schwarz R.T."/>
            <person name="Steel P.G."/>
            <person name="Denny P.W."/>
        </authorList>
    </citation>
    <scope>FUNCTION</scope>
    <scope>CATALYTIC ACTIVITY</scope>
</reference>
<reference key="4">
    <citation type="journal article" date="2011" name="Biochemistry">
        <title>Amino acid determinants of substrate selectivity in the Trypanosoma brucei sphingolipid synthase family.</title>
        <authorList>
            <person name="Goren M.A."/>
            <person name="Fox B.G."/>
            <person name="Bangs J.D."/>
        </authorList>
    </citation>
    <scope>FUNCTION</scope>
    <scope>CATALYTIC ACTIVITY</scope>
</reference>
<protein>
    <recommendedName>
        <fullName evidence="8">Phosphatidylcholine:ceramide cholinephosphotransferase 4</fullName>
        <shortName evidence="7 8">TbSLS4</shortName>
        <ecNumber evidence="3 4 5 6">2.7.8.-</ecNumber>
        <ecNumber evidence="3 5 6">2.7.8.27</ecNumber>
    </recommendedName>
    <alternativeName>
        <fullName evidence="8">Ethanolamine-phosphorylceramide synthase</fullName>
        <shortName evidence="8">EPC synthase</shortName>
    </alternativeName>
    <alternativeName>
        <fullName evidence="8">Sphingomyelin synthase</fullName>
        <shortName evidence="8">SM synthase</shortName>
    </alternativeName>
</protein>
<organism>
    <name type="scientific">Trypanosoma brucei brucei</name>
    <dbReference type="NCBI Taxonomy" id="5702"/>
    <lineage>
        <taxon>Eukaryota</taxon>
        <taxon>Discoba</taxon>
        <taxon>Euglenozoa</taxon>
        <taxon>Kinetoplastea</taxon>
        <taxon>Metakinetoplastina</taxon>
        <taxon>Trypanosomatida</taxon>
        <taxon>Trypanosomatidae</taxon>
        <taxon>Trypanosoma</taxon>
    </lineage>
</organism>
<gene>
    <name evidence="7 8" type="primary">SLS4</name>
</gene>
<dbReference type="EC" id="2.7.8.-" evidence="3 4 5 6"/>
<dbReference type="EC" id="2.7.8.27" evidence="3 5 6"/>
<dbReference type="GO" id="GO:0005789">
    <property type="term" value="C:endoplasmic reticulum membrane"/>
    <property type="evidence" value="ECO:0007669"/>
    <property type="project" value="TreeGrafter"/>
</dbReference>
<dbReference type="GO" id="GO:0000139">
    <property type="term" value="C:Golgi membrane"/>
    <property type="evidence" value="ECO:0007669"/>
    <property type="project" value="UniProtKB-SubCell"/>
</dbReference>
<dbReference type="GO" id="GO:0005886">
    <property type="term" value="C:plasma membrane"/>
    <property type="evidence" value="ECO:0007669"/>
    <property type="project" value="TreeGrafter"/>
</dbReference>
<dbReference type="GO" id="GO:0047493">
    <property type="term" value="F:ceramide cholinephosphotransferase activity"/>
    <property type="evidence" value="ECO:0007669"/>
    <property type="project" value="TreeGrafter"/>
</dbReference>
<dbReference type="GO" id="GO:0016301">
    <property type="term" value="F:kinase activity"/>
    <property type="evidence" value="ECO:0007669"/>
    <property type="project" value="UniProtKB-KW"/>
</dbReference>
<dbReference type="GO" id="GO:0033188">
    <property type="term" value="F:sphingomyelin synthase activity"/>
    <property type="evidence" value="ECO:0007669"/>
    <property type="project" value="UniProtKB-EC"/>
</dbReference>
<dbReference type="GO" id="GO:0046513">
    <property type="term" value="P:ceramide biosynthetic process"/>
    <property type="evidence" value="ECO:0007669"/>
    <property type="project" value="TreeGrafter"/>
</dbReference>
<dbReference type="InterPro" id="IPR045221">
    <property type="entry name" value="Sphingomyelin_synth-like"/>
</dbReference>
<dbReference type="InterPro" id="IPR025749">
    <property type="entry name" value="Sphingomyelin_synth-like_dom"/>
</dbReference>
<dbReference type="PANTHER" id="PTHR21290:SF25">
    <property type="entry name" value="SPHINGOMYELIN SYNTHASE-RELATED PROTEIN 1"/>
    <property type="match status" value="1"/>
</dbReference>
<dbReference type="PANTHER" id="PTHR21290">
    <property type="entry name" value="SPHINGOMYELIN SYNTHETASE"/>
    <property type="match status" value="1"/>
</dbReference>
<dbReference type="Pfam" id="PF14360">
    <property type="entry name" value="PAP2_C"/>
    <property type="match status" value="1"/>
</dbReference>
<comment type="function">
    <text evidence="3 4 5 6 7">Bifunctional sphingomyelin (SM)/ethanolamine phosphorylceramide (EPC) synthase with minimal inositol phosphorylceramide (IPC) synthase activity (PubMed:18699867, PubMed:19545591, PubMed:20457606, PubMed:21899277). Specificity is likely to be defined by residues in the lumenal catalytic domain that interact with the polar head groups of the phospholipid donors (PubMed:21899277). SM is synthesized by both stages of the parasite life cycle, bloodstream forms (BSF) and procyclic forms (PCF), by transferring the phosphoryl headgroup from a 1,2-diacyl-sn-glycero-3-phosphocholine to an N-acylsphing-4-enine (ceramide) or an N-acylsphinganine (dihydroceramide) with release of 1,2-diacyl-sn-glycerol (PubMed:18699867). Also catalyzes the reverse reaction, production of ceramide from sphingomyelin (PubMed:21899277). EPC is synthesized by transferring phosphoethanolamine from a 1,2-diacyl-sn-glycero-3-phosphoethanolamine to ceramide or dihydroceramide by BSF and PCF, while IPC is confined to PCF (PubMed:18699867). The ceramide/dihydroceramide ratios are skewed towards dihydroceramide in PCF parasites and ceramide in BSF parasites, this is likely due to differential expression and/or regulation of dihydroceramide desaturase, the enzyme responsible for converting dihydroceramide to ceramide (PubMed:18699867).</text>
</comment>
<comment type="catalytic activity">
    <reaction evidence="3 5 6">
        <text>an N-acylsphing-4-enine + a 1,2-diacyl-sn-glycero-3-phosphocholine = a sphingomyelin + a 1,2-diacyl-sn-glycerol</text>
        <dbReference type="Rhea" id="RHEA:18765"/>
        <dbReference type="ChEBI" id="CHEBI:17636"/>
        <dbReference type="ChEBI" id="CHEBI:17815"/>
        <dbReference type="ChEBI" id="CHEBI:52639"/>
        <dbReference type="ChEBI" id="CHEBI:57643"/>
        <dbReference type="EC" id="2.7.8.27"/>
    </reaction>
    <physiologicalReaction direction="left-to-right" evidence="3 5 6">
        <dbReference type="Rhea" id="RHEA:18766"/>
    </physiologicalReaction>
    <physiologicalReaction direction="right-to-left" evidence="6">
        <dbReference type="Rhea" id="RHEA:18767"/>
    </physiologicalReaction>
</comment>
<comment type="catalytic activity">
    <reaction evidence="9">
        <text>an N-acylsphinganine + a 1,2-diacyl-sn-glycero-3-phosphocholine = an N-acylsphinganine-1-phosphocholine + a 1,2-diacyl-sn-glycerol</text>
        <dbReference type="Rhea" id="RHEA:44620"/>
        <dbReference type="ChEBI" id="CHEBI:17815"/>
        <dbReference type="ChEBI" id="CHEBI:31488"/>
        <dbReference type="ChEBI" id="CHEBI:57643"/>
        <dbReference type="ChEBI" id="CHEBI:67090"/>
    </reaction>
    <physiologicalReaction direction="left-to-right" evidence="9">
        <dbReference type="Rhea" id="RHEA:44621"/>
    </physiologicalReaction>
</comment>
<comment type="catalytic activity">
    <reaction evidence="5 6 9">
        <text>an N-acylsphing-4-enine + a 1,2-diacyl-sn-glycero-3-phosphoethanolamine = an N-acylsphing-4-enine 1-phosphoethanolamine + a 1,2-diacyl-sn-glycerol</text>
        <dbReference type="Rhea" id="RHEA:36079"/>
        <dbReference type="ChEBI" id="CHEBI:17815"/>
        <dbReference type="ChEBI" id="CHEBI:52639"/>
        <dbReference type="ChEBI" id="CHEBI:64612"/>
        <dbReference type="ChEBI" id="CHEBI:73203"/>
    </reaction>
    <physiologicalReaction direction="left-to-right" evidence="5 6 9">
        <dbReference type="Rhea" id="RHEA:36080"/>
    </physiologicalReaction>
</comment>
<comment type="catalytic activity">
    <reaction evidence="9">
        <text>an N-acylsphinganine + a 1,2-diacyl-sn-glycero-3-phosphoethanolamine = an N-acylsphinganine-1-phosphoethanolamine + a 1,2-diacyl-sn-glycerol</text>
        <dbReference type="Rhea" id="RHEA:42136"/>
        <dbReference type="ChEBI" id="CHEBI:17815"/>
        <dbReference type="ChEBI" id="CHEBI:31488"/>
        <dbReference type="ChEBI" id="CHEBI:64612"/>
        <dbReference type="ChEBI" id="CHEBI:78655"/>
    </reaction>
    <physiologicalReaction direction="left-to-right" evidence="9">
        <dbReference type="Rhea" id="RHEA:42137"/>
    </physiologicalReaction>
</comment>
<comment type="catalytic activity">
    <reaction evidence="4">
        <text>a 1,2-diacyl-sn-glycero-3-phospho-(1D-myo-inositol) + an N-acylsphing-4-enine = an N-acylsphing-4-enine-(1D-myo-inositol) + a 1,2-diacyl-sn-glycerol</text>
        <dbReference type="Rhea" id="RHEA:73683"/>
        <dbReference type="ChEBI" id="CHEBI:17815"/>
        <dbReference type="ChEBI" id="CHEBI:52639"/>
        <dbReference type="ChEBI" id="CHEBI:57880"/>
        <dbReference type="ChEBI" id="CHEBI:192974"/>
    </reaction>
    <physiologicalReaction direction="left-to-right" evidence="4">
        <dbReference type="Rhea" id="RHEA:73684"/>
    </physiologicalReaction>
</comment>
<comment type="catalytic activity">
    <reaction evidence="10">
        <text>an N-acylsphinganine + a 1,2-diacyl-sn-glycero-3-phospho-(1D-myo-inositol) = an N-acylsphinganine-(1D-myo-inositol) + a 1,2-diacyl-sn-glycerol</text>
        <dbReference type="Rhea" id="RHEA:33475"/>
        <dbReference type="ChEBI" id="CHEBI:17815"/>
        <dbReference type="ChEBI" id="CHEBI:31488"/>
        <dbReference type="ChEBI" id="CHEBI:57880"/>
        <dbReference type="ChEBI" id="CHEBI:64941"/>
    </reaction>
    <physiologicalReaction direction="left-to-right" evidence="10">
        <dbReference type="Rhea" id="RHEA:33476"/>
    </physiologicalReaction>
</comment>
<comment type="subcellular location">
    <subcellularLocation>
        <location evidence="3">Golgi apparatus membrane</location>
        <topology evidence="3">Multi-pass membrane protein</topology>
    </subcellularLocation>
</comment>
<comment type="developmental stage">
    <text evidence="3">Expressed in both bloodstream and procyclic stage parasites.</text>
</comment>
<comment type="disruption phenotype">
    <text evidence="3">Elevated ceramide levels and growth arrest; cells were arrested in division but replication of DNA and organelles continued giving rise to cells containing multiple nuclei, kinetoplasts and flagella.</text>
</comment>
<comment type="similarity">
    <text evidence="2">Belongs to the sphingomyelin synthase family.</text>
</comment>